<gene>
    <name evidence="1" type="primary">rpmD</name>
    <name type="ordered locus">BL1598</name>
</gene>
<evidence type="ECO:0000255" key="1">
    <source>
        <dbReference type="HAMAP-Rule" id="MF_01371"/>
    </source>
</evidence>
<evidence type="ECO:0000305" key="2"/>
<organism>
    <name type="scientific">Bifidobacterium longum (strain NCC 2705)</name>
    <dbReference type="NCBI Taxonomy" id="206672"/>
    <lineage>
        <taxon>Bacteria</taxon>
        <taxon>Bacillati</taxon>
        <taxon>Actinomycetota</taxon>
        <taxon>Actinomycetes</taxon>
        <taxon>Bifidobacteriales</taxon>
        <taxon>Bifidobacteriaceae</taxon>
        <taxon>Bifidobacterium</taxon>
    </lineage>
</organism>
<protein>
    <recommendedName>
        <fullName evidence="1">Large ribosomal subunit protein uL30</fullName>
    </recommendedName>
    <alternativeName>
        <fullName evidence="2">50S ribosomal protein L30</fullName>
    </alternativeName>
</protein>
<dbReference type="EMBL" id="AE014295">
    <property type="protein sequence ID" value="AAN25387.1"/>
    <property type="molecule type" value="Genomic_DNA"/>
</dbReference>
<dbReference type="RefSeq" id="NP_696751.1">
    <property type="nucleotide sequence ID" value="NC_004307.2"/>
</dbReference>
<dbReference type="RefSeq" id="WP_007053043.1">
    <property type="nucleotide sequence ID" value="NC_004307.2"/>
</dbReference>
<dbReference type="SMR" id="Q8G401"/>
<dbReference type="STRING" id="206672.BL1598"/>
<dbReference type="EnsemblBacteria" id="AAN25387">
    <property type="protein sequence ID" value="AAN25387"/>
    <property type="gene ID" value="BL1598"/>
</dbReference>
<dbReference type="GeneID" id="69578879"/>
<dbReference type="KEGG" id="blo:BL1598"/>
<dbReference type="PATRIC" id="fig|206672.9.peg.1653"/>
<dbReference type="HOGENOM" id="CLU_131047_2_0_11"/>
<dbReference type="OrthoDB" id="9812790at2"/>
<dbReference type="PhylomeDB" id="Q8G401"/>
<dbReference type="Proteomes" id="UP000000439">
    <property type="component" value="Chromosome"/>
</dbReference>
<dbReference type="GO" id="GO:0022625">
    <property type="term" value="C:cytosolic large ribosomal subunit"/>
    <property type="evidence" value="ECO:0007669"/>
    <property type="project" value="TreeGrafter"/>
</dbReference>
<dbReference type="GO" id="GO:0003735">
    <property type="term" value="F:structural constituent of ribosome"/>
    <property type="evidence" value="ECO:0007669"/>
    <property type="project" value="InterPro"/>
</dbReference>
<dbReference type="GO" id="GO:0006412">
    <property type="term" value="P:translation"/>
    <property type="evidence" value="ECO:0007669"/>
    <property type="project" value="UniProtKB-UniRule"/>
</dbReference>
<dbReference type="CDD" id="cd01658">
    <property type="entry name" value="Ribosomal_L30"/>
    <property type="match status" value="1"/>
</dbReference>
<dbReference type="Gene3D" id="3.30.1390.20">
    <property type="entry name" value="Ribosomal protein L30, ferredoxin-like fold domain"/>
    <property type="match status" value="1"/>
</dbReference>
<dbReference type="HAMAP" id="MF_01371_B">
    <property type="entry name" value="Ribosomal_uL30_B"/>
    <property type="match status" value="1"/>
</dbReference>
<dbReference type="InterPro" id="IPR036919">
    <property type="entry name" value="Ribo_uL30_ferredoxin-like_sf"/>
</dbReference>
<dbReference type="InterPro" id="IPR005996">
    <property type="entry name" value="Ribosomal_uL30_bac-type"/>
</dbReference>
<dbReference type="InterPro" id="IPR016082">
    <property type="entry name" value="Ribosomal_uL30_ferredoxin-like"/>
</dbReference>
<dbReference type="NCBIfam" id="TIGR01308">
    <property type="entry name" value="rpmD_bact"/>
    <property type="match status" value="1"/>
</dbReference>
<dbReference type="PANTHER" id="PTHR15892:SF2">
    <property type="entry name" value="LARGE RIBOSOMAL SUBUNIT PROTEIN UL30M"/>
    <property type="match status" value="1"/>
</dbReference>
<dbReference type="PANTHER" id="PTHR15892">
    <property type="entry name" value="MITOCHONDRIAL RIBOSOMAL PROTEIN L30"/>
    <property type="match status" value="1"/>
</dbReference>
<dbReference type="Pfam" id="PF00327">
    <property type="entry name" value="Ribosomal_L30"/>
    <property type="match status" value="1"/>
</dbReference>
<dbReference type="PIRSF" id="PIRSF002211">
    <property type="entry name" value="Ribosomal_L30_bac-type"/>
    <property type="match status" value="1"/>
</dbReference>
<dbReference type="SUPFAM" id="SSF55129">
    <property type="entry name" value="Ribosomal protein L30p/L7e"/>
    <property type="match status" value="1"/>
</dbReference>
<comment type="subunit">
    <text evidence="1">Part of the 50S ribosomal subunit.</text>
</comment>
<comment type="similarity">
    <text evidence="1">Belongs to the universal ribosomal protein uL30 family.</text>
</comment>
<accession>Q8G401</accession>
<proteinExistence type="inferred from homology"/>
<keyword id="KW-1185">Reference proteome</keyword>
<keyword id="KW-0687">Ribonucleoprotein</keyword>
<keyword id="KW-0689">Ribosomal protein</keyword>
<sequence length="61" mass="6695">MAKNLKITLHHGIVNRTPAQRATVKTLGLNKIGKTVVREDTPANRGLVNAVRHLVTVEEVD</sequence>
<feature type="chain" id="PRO_0000273748" description="Large ribosomal subunit protein uL30">
    <location>
        <begin position="1"/>
        <end position="61"/>
    </location>
</feature>
<reference key="1">
    <citation type="journal article" date="2002" name="Proc. Natl. Acad. Sci. U.S.A.">
        <title>The genome sequence of Bifidobacterium longum reflects its adaptation to the human gastrointestinal tract.</title>
        <authorList>
            <person name="Schell M.A."/>
            <person name="Karmirantzou M."/>
            <person name="Snel B."/>
            <person name="Vilanova D."/>
            <person name="Berger B."/>
            <person name="Pessi G."/>
            <person name="Zwahlen M.-C."/>
            <person name="Desiere F."/>
            <person name="Bork P."/>
            <person name="Delley M."/>
            <person name="Pridmore R.D."/>
            <person name="Arigoni F."/>
        </authorList>
    </citation>
    <scope>NUCLEOTIDE SEQUENCE [LARGE SCALE GENOMIC DNA]</scope>
    <source>
        <strain>NCC 2705</strain>
    </source>
</reference>
<name>RL30_BIFLO</name>